<evidence type="ECO:0000255" key="1">
    <source>
        <dbReference type="HAMAP-Rule" id="MF_00787"/>
    </source>
</evidence>
<organism>
    <name type="scientific">Leptospira interrogans serogroup Icterohaemorrhagiae serovar Lai (strain 56601)</name>
    <dbReference type="NCBI Taxonomy" id="189518"/>
    <lineage>
        <taxon>Bacteria</taxon>
        <taxon>Pseudomonadati</taxon>
        <taxon>Spirochaetota</taxon>
        <taxon>Spirochaetia</taxon>
        <taxon>Leptospirales</taxon>
        <taxon>Leptospiraceae</taxon>
        <taxon>Leptospira</taxon>
    </lineage>
</organism>
<sequence length="367" mass="39047">MTGKKLKEGFTTGACSAAAAKAATRLLLKGKPILEIETTLPNKRQVLFTVKRCQLEGEIATCSVVKDAGDDPDCTHGAELTARVRLTKENEIKLKGGDGVAVVTKAGLGLEIGQSAINPIPRKNIKEMILEELQGSSFNGAEVEISVPGGQEMAKKTMNERLGLIGGISILGTTGIVKPYSTAAFKASVIQAIQMAKEYGIDTIVLTTGGKSEKFAMDLLPNLNELSFIQVGDFIGTGIKTSVKESIRHTIIVGMIGKLSKMADGVMMTHRGGSSVNTTMLSTIARSIGVPEEIAIEIQNANTARHVLEICKVSGYKIITTKICEIVAEKCSKHAGTNIMISCYMVDFDGKLLGKCENFSPNVGLNL</sequence>
<name>CBID_LEPIN</name>
<accession>Q8EXP6</accession>
<proteinExistence type="inferred from homology"/>
<comment type="function">
    <text evidence="1">Catalyzes the methylation of C-1 in cobalt-precorrin-5B to form cobalt-precorrin-6A.</text>
</comment>
<comment type="catalytic activity">
    <reaction evidence="1">
        <text>Co-precorrin-5B + S-adenosyl-L-methionine = Co-precorrin-6A + S-adenosyl-L-homocysteine</text>
        <dbReference type="Rhea" id="RHEA:26285"/>
        <dbReference type="ChEBI" id="CHEBI:57856"/>
        <dbReference type="ChEBI" id="CHEBI:59789"/>
        <dbReference type="ChEBI" id="CHEBI:60063"/>
        <dbReference type="ChEBI" id="CHEBI:60064"/>
        <dbReference type="EC" id="2.1.1.195"/>
    </reaction>
</comment>
<comment type="pathway">
    <text evidence="1">Cofactor biosynthesis; adenosylcobalamin biosynthesis; cob(II)yrinate a,c-diamide from sirohydrochlorin (anaerobic route): step 6/10.</text>
</comment>
<comment type="similarity">
    <text evidence="1">Belongs to the CbiD family.</text>
</comment>
<feature type="chain" id="PRO_0000141669" description="Cobalt-precorrin-5B C(1)-methyltransferase">
    <location>
        <begin position="1"/>
        <end position="367"/>
    </location>
</feature>
<protein>
    <recommendedName>
        <fullName evidence="1">Cobalt-precorrin-5B C(1)-methyltransferase</fullName>
        <ecNumber evidence="1">2.1.1.195</ecNumber>
    </recommendedName>
    <alternativeName>
        <fullName evidence="1">Cobalt-precorrin-6A synthase</fullName>
    </alternativeName>
</protein>
<dbReference type="EC" id="2.1.1.195" evidence="1"/>
<dbReference type="EMBL" id="AE010301">
    <property type="protein sequence ID" value="AAN51721.1"/>
    <property type="molecule type" value="Genomic_DNA"/>
</dbReference>
<dbReference type="RefSeq" id="NP_714706.1">
    <property type="nucleotide sequence ID" value="NC_004343.2"/>
</dbReference>
<dbReference type="RefSeq" id="WP_000145958.1">
    <property type="nucleotide sequence ID" value="NC_004343.2"/>
</dbReference>
<dbReference type="SMR" id="Q8EXP6"/>
<dbReference type="STRING" id="189518.LB_162"/>
<dbReference type="PaxDb" id="189518-LB_162"/>
<dbReference type="EnsemblBacteria" id="AAN51721">
    <property type="protein sequence ID" value="AAN51721"/>
    <property type="gene ID" value="LB_162"/>
</dbReference>
<dbReference type="KEGG" id="lil:LB_162"/>
<dbReference type="PATRIC" id="fig|189518.3.peg.4490"/>
<dbReference type="HOGENOM" id="CLU_041273_0_0_12"/>
<dbReference type="InParanoid" id="Q8EXP6"/>
<dbReference type="OrthoDB" id="6439987at2"/>
<dbReference type="UniPathway" id="UPA00148">
    <property type="reaction ID" value="UER00227"/>
</dbReference>
<dbReference type="Proteomes" id="UP000001408">
    <property type="component" value="Chromosome II"/>
</dbReference>
<dbReference type="GO" id="GO:0043780">
    <property type="term" value="F:cobalt-precorrin-5B C1-methyltransferase activity"/>
    <property type="evidence" value="ECO:0007669"/>
    <property type="project" value="RHEA"/>
</dbReference>
<dbReference type="GO" id="GO:0019251">
    <property type="term" value="P:anaerobic cobalamin biosynthetic process"/>
    <property type="evidence" value="ECO:0007669"/>
    <property type="project" value="UniProtKB-UniRule"/>
</dbReference>
<dbReference type="GO" id="GO:0032259">
    <property type="term" value="P:methylation"/>
    <property type="evidence" value="ECO:0007669"/>
    <property type="project" value="UniProtKB-KW"/>
</dbReference>
<dbReference type="Gene3D" id="3.30.2110.10">
    <property type="entry name" value="CbiD-like"/>
    <property type="match status" value="1"/>
</dbReference>
<dbReference type="HAMAP" id="MF_00787">
    <property type="entry name" value="CbiD"/>
    <property type="match status" value="1"/>
</dbReference>
<dbReference type="InterPro" id="IPR002748">
    <property type="entry name" value="CbiD"/>
</dbReference>
<dbReference type="InterPro" id="IPR036074">
    <property type="entry name" value="CbiD_sf"/>
</dbReference>
<dbReference type="NCBIfam" id="TIGR00312">
    <property type="entry name" value="cbiD"/>
    <property type="match status" value="1"/>
</dbReference>
<dbReference type="NCBIfam" id="NF000849">
    <property type="entry name" value="PRK00075.1-1"/>
    <property type="match status" value="1"/>
</dbReference>
<dbReference type="PANTHER" id="PTHR35863">
    <property type="entry name" value="COBALT-PRECORRIN-5B C(1)-METHYLTRANSFERASE"/>
    <property type="match status" value="1"/>
</dbReference>
<dbReference type="PANTHER" id="PTHR35863:SF1">
    <property type="entry name" value="COBALT-PRECORRIN-5B C(1)-METHYLTRANSFERASE"/>
    <property type="match status" value="1"/>
</dbReference>
<dbReference type="Pfam" id="PF01888">
    <property type="entry name" value="CbiD"/>
    <property type="match status" value="1"/>
</dbReference>
<dbReference type="PIRSF" id="PIRSF026782">
    <property type="entry name" value="CbiD"/>
    <property type="match status" value="1"/>
</dbReference>
<dbReference type="SUPFAM" id="SSF111342">
    <property type="entry name" value="CbiD-like"/>
    <property type="match status" value="1"/>
</dbReference>
<gene>
    <name evidence="1" type="primary">cbiD</name>
    <name type="ordered locus">LB_162</name>
</gene>
<reference key="1">
    <citation type="journal article" date="2003" name="Nature">
        <title>Unique physiological and pathogenic features of Leptospira interrogans revealed by whole-genome sequencing.</title>
        <authorList>
            <person name="Ren S.-X."/>
            <person name="Fu G."/>
            <person name="Jiang X.-G."/>
            <person name="Zeng R."/>
            <person name="Miao Y.-G."/>
            <person name="Xu H."/>
            <person name="Zhang Y.-X."/>
            <person name="Xiong H."/>
            <person name="Lu G."/>
            <person name="Lu L.-F."/>
            <person name="Jiang H.-Q."/>
            <person name="Jia J."/>
            <person name="Tu Y.-F."/>
            <person name="Jiang J.-X."/>
            <person name="Gu W.-Y."/>
            <person name="Zhang Y.-Q."/>
            <person name="Cai Z."/>
            <person name="Sheng H.-H."/>
            <person name="Yin H.-F."/>
            <person name="Zhang Y."/>
            <person name="Zhu G.-F."/>
            <person name="Wan M."/>
            <person name="Huang H.-L."/>
            <person name="Qian Z."/>
            <person name="Wang S.-Y."/>
            <person name="Ma W."/>
            <person name="Yao Z.-J."/>
            <person name="Shen Y."/>
            <person name="Qiang B.-Q."/>
            <person name="Xia Q.-C."/>
            <person name="Guo X.-K."/>
            <person name="Danchin A."/>
            <person name="Saint Girons I."/>
            <person name="Somerville R.L."/>
            <person name="Wen Y.-M."/>
            <person name="Shi M.-H."/>
            <person name="Chen Z."/>
            <person name="Xu J.-G."/>
            <person name="Zhao G.-P."/>
        </authorList>
    </citation>
    <scope>NUCLEOTIDE SEQUENCE [LARGE SCALE GENOMIC DNA]</scope>
    <source>
        <strain>56601</strain>
    </source>
</reference>
<keyword id="KW-0169">Cobalamin biosynthesis</keyword>
<keyword id="KW-0489">Methyltransferase</keyword>
<keyword id="KW-1185">Reference proteome</keyword>
<keyword id="KW-0949">S-adenosyl-L-methionine</keyword>
<keyword id="KW-0808">Transferase</keyword>